<name>AC4CH_ECOSM</name>
<comment type="function">
    <text evidence="2">Catalyzes the hydrolysis of N(4)-acetylcytidine (ac4C).</text>
</comment>
<comment type="catalytic activity">
    <reaction evidence="2">
        <text>N(4)-acetylcytidine + H2O = cytidine + acetate + H(+)</text>
        <dbReference type="Rhea" id="RHEA:62932"/>
        <dbReference type="ChEBI" id="CHEBI:15377"/>
        <dbReference type="ChEBI" id="CHEBI:15378"/>
        <dbReference type="ChEBI" id="CHEBI:17562"/>
        <dbReference type="ChEBI" id="CHEBI:30089"/>
        <dbReference type="ChEBI" id="CHEBI:70989"/>
        <dbReference type="EC" id="3.5.1.135"/>
    </reaction>
</comment>
<comment type="catalytic activity">
    <reaction evidence="2">
        <text>N(4)-acetyl-2'-deoxycytidine + H2O = 2'-deoxycytidine + acetate + H(+)</text>
        <dbReference type="Rhea" id="RHEA:62936"/>
        <dbReference type="ChEBI" id="CHEBI:15377"/>
        <dbReference type="ChEBI" id="CHEBI:15378"/>
        <dbReference type="ChEBI" id="CHEBI:15698"/>
        <dbReference type="ChEBI" id="CHEBI:30089"/>
        <dbReference type="ChEBI" id="CHEBI:146133"/>
        <dbReference type="EC" id="3.5.1.135"/>
    </reaction>
</comment>
<comment type="catalytic activity">
    <reaction evidence="2">
        <text>N(4)-acetylcytosine + H2O = cytosine + acetate + H(+)</text>
        <dbReference type="Rhea" id="RHEA:62940"/>
        <dbReference type="ChEBI" id="CHEBI:15377"/>
        <dbReference type="ChEBI" id="CHEBI:15378"/>
        <dbReference type="ChEBI" id="CHEBI:16040"/>
        <dbReference type="ChEBI" id="CHEBI:30089"/>
        <dbReference type="ChEBI" id="CHEBI:146134"/>
        <dbReference type="EC" id="3.5.1.135"/>
    </reaction>
</comment>
<comment type="similarity">
    <text evidence="2">Belongs to the N(4)-acetylcytidine amidohydrolase family.</text>
</comment>
<protein>
    <recommendedName>
        <fullName evidence="2">N(4)-acetylcytidine amidohydrolase</fullName>
        <shortName evidence="2">ac4C amidohydrolase</shortName>
        <ecNumber evidence="2">3.5.1.135</ecNumber>
    </recommendedName>
</protein>
<evidence type="ECO:0000255" key="1"/>
<evidence type="ECO:0000255" key="2">
    <source>
        <dbReference type="HAMAP-Rule" id="MF_00684"/>
    </source>
</evidence>
<proteinExistence type="inferred from homology"/>
<accession>B1LDA1</accession>
<gene>
    <name type="primary">yqfB</name>
    <name type="ordered locus">EcSMS35_3033</name>
</gene>
<organism>
    <name type="scientific">Escherichia coli (strain SMS-3-5 / SECEC)</name>
    <dbReference type="NCBI Taxonomy" id="439855"/>
    <lineage>
        <taxon>Bacteria</taxon>
        <taxon>Pseudomonadati</taxon>
        <taxon>Pseudomonadota</taxon>
        <taxon>Gammaproteobacteria</taxon>
        <taxon>Enterobacterales</taxon>
        <taxon>Enterobacteriaceae</taxon>
        <taxon>Escherichia</taxon>
    </lineage>
</organism>
<feature type="chain" id="PRO_1000131789" description="N(4)-acetylcytidine amidohydrolase">
    <location>
        <begin position="1"/>
        <end position="103"/>
    </location>
</feature>
<feature type="domain" description="ASCH" evidence="1">
    <location>
        <begin position="6"/>
        <end position="101"/>
    </location>
</feature>
<feature type="active site" description="Proton acceptor" evidence="2">
    <location>
        <position position="21"/>
    </location>
</feature>
<feature type="active site" description="Nucleophile" evidence="2">
    <location>
        <position position="24"/>
    </location>
</feature>
<feature type="active site" description="Proton donor" evidence="2">
    <location>
        <position position="74"/>
    </location>
</feature>
<dbReference type="EC" id="3.5.1.135" evidence="2"/>
<dbReference type="EMBL" id="CP000970">
    <property type="protein sequence ID" value="ACB18959.1"/>
    <property type="molecule type" value="Genomic_DNA"/>
</dbReference>
<dbReference type="RefSeq" id="WP_001182958.1">
    <property type="nucleotide sequence ID" value="NC_010498.1"/>
</dbReference>
<dbReference type="BMRB" id="B1LDA1"/>
<dbReference type="SMR" id="B1LDA1"/>
<dbReference type="KEGG" id="ecm:EcSMS35_3033"/>
<dbReference type="HOGENOM" id="CLU_152586_0_0_6"/>
<dbReference type="Proteomes" id="UP000007011">
    <property type="component" value="Chromosome"/>
</dbReference>
<dbReference type="GO" id="GO:0005829">
    <property type="term" value="C:cytosol"/>
    <property type="evidence" value="ECO:0007669"/>
    <property type="project" value="TreeGrafter"/>
</dbReference>
<dbReference type="GO" id="GO:0016813">
    <property type="term" value="F:hydrolase activity, acting on carbon-nitrogen (but not peptide) bonds, in linear amidines"/>
    <property type="evidence" value="ECO:0007669"/>
    <property type="project" value="UniProtKB-UniRule"/>
</dbReference>
<dbReference type="GO" id="GO:0106251">
    <property type="term" value="F:N4-acetylcytidine amidohydrolase activity"/>
    <property type="evidence" value="ECO:0007669"/>
    <property type="project" value="RHEA"/>
</dbReference>
<dbReference type="CDD" id="cd06552">
    <property type="entry name" value="ASCH_yqfb_like"/>
    <property type="match status" value="1"/>
</dbReference>
<dbReference type="FunFam" id="2.30.130.30:FF:000001">
    <property type="entry name" value="UPF0267 protein YqfB"/>
    <property type="match status" value="1"/>
</dbReference>
<dbReference type="Gene3D" id="2.30.130.30">
    <property type="entry name" value="Hypothetical protein"/>
    <property type="match status" value="1"/>
</dbReference>
<dbReference type="HAMAP" id="MF_00684">
    <property type="entry name" value="ac4C_amidohydr"/>
    <property type="match status" value="1"/>
</dbReference>
<dbReference type="InterPro" id="IPR008314">
    <property type="entry name" value="AC4CH"/>
</dbReference>
<dbReference type="InterPro" id="IPR007374">
    <property type="entry name" value="ASCH_domain"/>
</dbReference>
<dbReference type="InterPro" id="IPR015947">
    <property type="entry name" value="PUA-like_sf"/>
</dbReference>
<dbReference type="NCBIfam" id="NF003443">
    <property type="entry name" value="PRK04980.1"/>
    <property type="match status" value="1"/>
</dbReference>
<dbReference type="PANTHER" id="PTHR38088">
    <property type="entry name" value="UCP029143 FAMILY PROTEIN"/>
    <property type="match status" value="1"/>
</dbReference>
<dbReference type="PANTHER" id="PTHR38088:SF2">
    <property type="entry name" value="UCP029143 FAMILY PROTEIN"/>
    <property type="match status" value="1"/>
</dbReference>
<dbReference type="Pfam" id="PF04266">
    <property type="entry name" value="ASCH"/>
    <property type="match status" value="1"/>
</dbReference>
<dbReference type="PIRSF" id="PIRSF029143">
    <property type="entry name" value="UCP029143"/>
    <property type="match status" value="1"/>
</dbReference>
<dbReference type="SMART" id="SM01022">
    <property type="entry name" value="ASCH"/>
    <property type="match status" value="1"/>
</dbReference>
<dbReference type="SUPFAM" id="SSF88697">
    <property type="entry name" value="PUA domain-like"/>
    <property type="match status" value="1"/>
</dbReference>
<sequence>MQPNDITFFQRFQDDILAGRKTITIRDESESHFKTGDVLRVGRFEDDGYFCTIEVTATSTVTLDTLTEKHAGQENMTLPELKKVIADIYPGQIQFYVIEFKCL</sequence>
<keyword id="KW-0378">Hydrolase</keyword>
<reference key="1">
    <citation type="journal article" date="2008" name="J. Bacteriol.">
        <title>Insights into the environmental resistance gene pool from the genome sequence of the multidrug-resistant environmental isolate Escherichia coli SMS-3-5.</title>
        <authorList>
            <person name="Fricke W.F."/>
            <person name="Wright M.S."/>
            <person name="Lindell A.H."/>
            <person name="Harkins D.M."/>
            <person name="Baker-Austin C."/>
            <person name="Ravel J."/>
            <person name="Stepanauskas R."/>
        </authorList>
    </citation>
    <scope>NUCLEOTIDE SEQUENCE [LARGE SCALE GENOMIC DNA]</scope>
    <source>
        <strain>SMS-3-5 / SECEC</strain>
    </source>
</reference>